<reference key="1">
    <citation type="journal article" date="2004" name="Nucleic Acids Res.">
        <title>Unique features revealed by the genome sequence of Acinetobacter sp. ADP1, a versatile and naturally transformation competent bacterium.</title>
        <authorList>
            <person name="Barbe V."/>
            <person name="Vallenet D."/>
            <person name="Fonknechten N."/>
            <person name="Kreimeyer A."/>
            <person name="Oztas S."/>
            <person name="Labarre L."/>
            <person name="Cruveiller S."/>
            <person name="Robert C."/>
            <person name="Duprat S."/>
            <person name="Wincker P."/>
            <person name="Ornston L.N."/>
            <person name="Weissenbach J."/>
            <person name="Marliere P."/>
            <person name="Cohen G.N."/>
            <person name="Medigue C."/>
        </authorList>
    </citation>
    <scope>NUCLEOTIDE SEQUENCE [LARGE SCALE GENOMIC DNA]</scope>
    <source>
        <strain>ATCC 33305 / BD413 / ADP1</strain>
    </source>
</reference>
<organism>
    <name type="scientific">Acinetobacter baylyi (strain ATCC 33305 / BD413 / ADP1)</name>
    <dbReference type="NCBI Taxonomy" id="62977"/>
    <lineage>
        <taxon>Bacteria</taxon>
        <taxon>Pseudomonadati</taxon>
        <taxon>Pseudomonadota</taxon>
        <taxon>Gammaproteobacteria</taxon>
        <taxon>Moraxellales</taxon>
        <taxon>Moraxellaceae</taxon>
        <taxon>Acinetobacter</taxon>
    </lineage>
</organism>
<keyword id="KW-0276">Fatty acid metabolism</keyword>
<keyword id="KW-0413">Isomerase</keyword>
<keyword id="KW-0442">Lipid degradation</keyword>
<keyword id="KW-0443">Lipid metabolism</keyword>
<keyword id="KW-0456">Lyase</keyword>
<keyword id="KW-0511">Multifunctional enzyme</keyword>
<keyword id="KW-0520">NAD</keyword>
<keyword id="KW-0560">Oxidoreductase</keyword>
<protein>
    <recommendedName>
        <fullName evidence="1">Fatty acid oxidation complex subunit alpha</fullName>
    </recommendedName>
    <domain>
        <recommendedName>
            <fullName evidence="1">Enoyl-CoA hydratase/Delta(3)-cis-Delta(2)-trans-enoyl-CoA isomerase/3-hydroxybutyryl-CoA epimerase</fullName>
            <ecNumber evidence="1">4.2.1.17</ecNumber>
            <ecNumber evidence="1">5.1.2.3</ecNumber>
            <ecNumber evidence="1">5.3.3.8</ecNumber>
        </recommendedName>
    </domain>
    <domain>
        <recommendedName>
            <fullName evidence="1">3-hydroxyacyl-CoA dehydrogenase</fullName>
            <ecNumber evidence="1">1.1.1.35</ecNumber>
        </recommendedName>
    </domain>
</protein>
<sequence length="717" mass="77985">MIHAGNAITVQMLSDGIAEFRFDLQGESVNKFNRATIEDFQAAIEAVKNHPEVKGLIVTSAKSTFIVGADITEFGQNFAQGEKAIVEWALPVHDIFNSFEDLDIPKVAAINGMALGGGFEMCLVCDYRVMSDQAQVGLPEIKLGIFPGFGGTVRLSRLIGIDNAVEWIAMAAPKKPAAALKDGAVDAVVSADKLQEAAIDLVKQALAGRVDWKAKRQEKLNPVKLNPLEQMMAFNTAKGAVLAKANPAQYPAPKLMLDSLQAGASLGRDEALKVETEGFAKAAITPQAEALIGLFLNDQIIKKTSKKHEKGAHPVNQAAVLGAGIMGGGIAYQAASKGTPIIMKDIGNPQLALGMQEANGLLTKQVERKKLTPAKMGETLARIRPTLSYDEFKEVDIVIEAVTENPKIKEAVLADTEAKVRDNTIIASNTSTISITRLAKALKRPENFVGMHFFNPVHMMPLVEVIRGEQTSEEAVATTVVLAQKMGKTPIVVNDCPGFLVNRVLFPYFGAFDLLLKDGADFQQIDKVMEKFGWPMGPAYLMDVVGIDTGVHGAEVMAEGFPDRMKPDYKGSIQTMYEAKRLGQKNDVGFYKYELDKKGKKAKTVDSTAYEVIAPVVTSEKREFDAQEIIDRMMLALCNETVRCLEDNIVATPAEADMAMIMGIGFPPFRGGPCRYIDQTGVAEYVALCNKYAHLGKAYEAPQLLRDMAENNKKFYG</sequence>
<comment type="function">
    <text evidence="1">Involved in the aerobic and anaerobic degradation of long-chain fatty acids via beta-oxidation cycle. Catalyzes the formation of 3-oxoacyl-CoA from enoyl-CoA via L-3-hydroxyacyl-CoA. It can also use D-3-hydroxyacyl-CoA and cis-3-enoyl-CoA as substrate.</text>
</comment>
<comment type="catalytic activity">
    <reaction evidence="1">
        <text>a (3S)-3-hydroxyacyl-CoA + NAD(+) = a 3-oxoacyl-CoA + NADH + H(+)</text>
        <dbReference type="Rhea" id="RHEA:22432"/>
        <dbReference type="ChEBI" id="CHEBI:15378"/>
        <dbReference type="ChEBI" id="CHEBI:57318"/>
        <dbReference type="ChEBI" id="CHEBI:57540"/>
        <dbReference type="ChEBI" id="CHEBI:57945"/>
        <dbReference type="ChEBI" id="CHEBI:90726"/>
        <dbReference type="EC" id="1.1.1.35"/>
    </reaction>
</comment>
<comment type="catalytic activity">
    <reaction evidence="1">
        <text>a (3S)-3-hydroxyacyl-CoA = a (2E)-enoyl-CoA + H2O</text>
        <dbReference type="Rhea" id="RHEA:16105"/>
        <dbReference type="ChEBI" id="CHEBI:15377"/>
        <dbReference type="ChEBI" id="CHEBI:57318"/>
        <dbReference type="ChEBI" id="CHEBI:58856"/>
        <dbReference type="EC" id="4.2.1.17"/>
    </reaction>
</comment>
<comment type="catalytic activity">
    <reaction evidence="1">
        <text>a 4-saturated-(3S)-3-hydroxyacyl-CoA = a (3E)-enoyl-CoA + H2O</text>
        <dbReference type="Rhea" id="RHEA:20724"/>
        <dbReference type="ChEBI" id="CHEBI:15377"/>
        <dbReference type="ChEBI" id="CHEBI:58521"/>
        <dbReference type="ChEBI" id="CHEBI:137480"/>
        <dbReference type="EC" id="4.2.1.17"/>
    </reaction>
</comment>
<comment type="catalytic activity">
    <reaction evidence="1">
        <text>(3S)-3-hydroxybutanoyl-CoA = (3R)-3-hydroxybutanoyl-CoA</text>
        <dbReference type="Rhea" id="RHEA:21760"/>
        <dbReference type="ChEBI" id="CHEBI:57315"/>
        <dbReference type="ChEBI" id="CHEBI:57316"/>
        <dbReference type="EC" id="5.1.2.3"/>
    </reaction>
</comment>
<comment type="catalytic activity">
    <reaction evidence="1">
        <text>a (3Z)-enoyl-CoA = a 4-saturated (2E)-enoyl-CoA</text>
        <dbReference type="Rhea" id="RHEA:45900"/>
        <dbReference type="ChEBI" id="CHEBI:85097"/>
        <dbReference type="ChEBI" id="CHEBI:85489"/>
        <dbReference type="EC" id="5.3.3.8"/>
    </reaction>
</comment>
<comment type="catalytic activity">
    <reaction evidence="1">
        <text>a (3E)-enoyl-CoA = a 4-saturated (2E)-enoyl-CoA</text>
        <dbReference type="Rhea" id="RHEA:45228"/>
        <dbReference type="ChEBI" id="CHEBI:58521"/>
        <dbReference type="ChEBI" id="CHEBI:85097"/>
        <dbReference type="EC" id="5.3.3.8"/>
    </reaction>
</comment>
<comment type="pathway">
    <text evidence="1">Lipid metabolism; fatty acid beta-oxidation.</text>
</comment>
<comment type="subunit">
    <text evidence="1">Heterotetramer of two alpha chains (FadB) and two beta chains (FadA).</text>
</comment>
<comment type="similarity">
    <text evidence="1">In the N-terminal section; belongs to the enoyl-CoA hydratase/isomerase family.</text>
</comment>
<comment type="similarity">
    <text evidence="1">In the C-terminal section; belongs to the 3-hydroxyacyl-CoA dehydrogenase family.</text>
</comment>
<proteinExistence type="inferred from homology"/>
<gene>
    <name evidence="1" type="primary">fadB</name>
    <name type="ordered locus">ACIAD0335</name>
</gene>
<feature type="chain" id="PRO_0000109264" description="Fatty acid oxidation complex subunit alpha">
    <location>
        <begin position="1"/>
        <end position="717"/>
    </location>
</feature>
<feature type="region of interest" description="Enoyl-CoA hydratase/isomerase" evidence="1">
    <location>
        <begin position="1"/>
        <end position="190"/>
    </location>
</feature>
<feature type="region of interest" description="3-hydroxyacyl-CoA dehydrogenase" evidence="1">
    <location>
        <begin position="313"/>
        <end position="717"/>
    </location>
</feature>
<feature type="active site" description="For 3-hydroxyacyl-CoA dehydrogenase activity" evidence="1">
    <location>
        <position position="452"/>
    </location>
</feature>
<feature type="binding site" evidence="1">
    <location>
        <position position="298"/>
    </location>
    <ligand>
        <name>substrate</name>
    </ligand>
</feature>
<feature type="binding site" evidence="1">
    <location>
        <position position="326"/>
    </location>
    <ligand>
        <name>NAD(+)</name>
        <dbReference type="ChEBI" id="CHEBI:57540"/>
    </ligand>
</feature>
<feature type="binding site" evidence="1">
    <location>
        <position position="345"/>
    </location>
    <ligand>
        <name>NAD(+)</name>
        <dbReference type="ChEBI" id="CHEBI:57540"/>
    </ligand>
</feature>
<feature type="binding site" evidence="1">
    <location>
        <begin position="402"/>
        <end position="404"/>
    </location>
    <ligand>
        <name>NAD(+)</name>
        <dbReference type="ChEBI" id="CHEBI:57540"/>
    </ligand>
</feature>
<feature type="binding site" evidence="1">
    <location>
        <position position="409"/>
    </location>
    <ligand>
        <name>NAD(+)</name>
        <dbReference type="ChEBI" id="CHEBI:57540"/>
    </ligand>
</feature>
<feature type="binding site" evidence="1">
    <location>
        <position position="431"/>
    </location>
    <ligand>
        <name>NAD(+)</name>
        <dbReference type="ChEBI" id="CHEBI:57540"/>
    </ligand>
</feature>
<feature type="binding site" evidence="1">
    <location>
        <position position="455"/>
    </location>
    <ligand>
        <name>NAD(+)</name>
        <dbReference type="ChEBI" id="CHEBI:57540"/>
    </ligand>
</feature>
<feature type="binding site" evidence="1">
    <location>
        <position position="502"/>
    </location>
    <ligand>
        <name>substrate</name>
    </ligand>
</feature>
<feature type="site" description="Important for catalytic activity" evidence="1">
    <location>
        <position position="120"/>
    </location>
</feature>
<feature type="site" description="Important for catalytic activity" evidence="1">
    <location>
        <position position="140"/>
    </location>
</feature>
<accession>Q6FF68</accession>
<evidence type="ECO:0000255" key="1">
    <source>
        <dbReference type="HAMAP-Rule" id="MF_01621"/>
    </source>
</evidence>
<name>FADB_ACIAD</name>
<dbReference type="EC" id="4.2.1.17" evidence="1"/>
<dbReference type="EC" id="5.1.2.3" evidence="1"/>
<dbReference type="EC" id="5.3.3.8" evidence="1"/>
<dbReference type="EC" id="1.1.1.35" evidence="1"/>
<dbReference type="EMBL" id="CR543861">
    <property type="protein sequence ID" value="CAG67289.1"/>
    <property type="molecule type" value="Genomic_DNA"/>
</dbReference>
<dbReference type="RefSeq" id="WP_004920538.1">
    <property type="nucleotide sequence ID" value="NC_005966.1"/>
</dbReference>
<dbReference type="SMR" id="Q6FF68"/>
<dbReference type="STRING" id="202950.GCA_001485005_00601"/>
<dbReference type="GeneID" id="45232842"/>
<dbReference type="KEGG" id="aci:ACIAD0335"/>
<dbReference type="eggNOG" id="COG1024">
    <property type="taxonomic scope" value="Bacteria"/>
</dbReference>
<dbReference type="eggNOG" id="COG1250">
    <property type="taxonomic scope" value="Bacteria"/>
</dbReference>
<dbReference type="HOGENOM" id="CLU_009834_16_3_6"/>
<dbReference type="OrthoDB" id="5389341at2"/>
<dbReference type="BioCyc" id="ASP62977:ACIAD_RS01570-MONOMER"/>
<dbReference type="UniPathway" id="UPA00659"/>
<dbReference type="Proteomes" id="UP000000430">
    <property type="component" value="Chromosome"/>
</dbReference>
<dbReference type="GO" id="GO:0036125">
    <property type="term" value="C:fatty acid beta-oxidation multienzyme complex"/>
    <property type="evidence" value="ECO:0007669"/>
    <property type="project" value="InterPro"/>
</dbReference>
<dbReference type="GO" id="GO:0008692">
    <property type="term" value="F:3-hydroxybutyryl-CoA epimerase activity"/>
    <property type="evidence" value="ECO:0007669"/>
    <property type="project" value="UniProtKB-UniRule"/>
</dbReference>
<dbReference type="GO" id="GO:0004165">
    <property type="term" value="F:delta(3)-delta(2)-enoyl-CoA isomerase activity"/>
    <property type="evidence" value="ECO:0007669"/>
    <property type="project" value="UniProtKB-UniRule"/>
</dbReference>
<dbReference type="GO" id="GO:0004300">
    <property type="term" value="F:enoyl-CoA hydratase activity"/>
    <property type="evidence" value="ECO:0007669"/>
    <property type="project" value="UniProtKB-UniRule"/>
</dbReference>
<dbReference type="GO" id="GO:0016509">
    <property type="term" value="F:long-chain-3-hydroxyacyl-CoA dehydrogenase activity"/>
    <property type="evidence" value="ECO:0007669"/>
    <property type="project" value="TreeGrafter"/>
</dbReference>
<dbReference type="GO" id="GO:0070403">
    <property type="term" value="F:NAD+ binding"/>
    <property type="evidence" value="ECO:0007669"/>
    <property type="project" value="InterPro"/>
</dbReference>
<dbReference type="GO" id="GO:0006635">
    <property type="term" value="P:fatty acid beta-oxidation"/>
    <property type="evidence" value="ECO:0007669"/>
    <property type="project" value="UniProtKB-UniRule"/>
</dbReference>
<dbReference type="CDD" id="cd06558">
    <property type="entry name" value="crotonase-like"/>
    <property type="match status" value="1"/>
</dbReference>
<dbReference type="FunFam" id="3.40.50.720:FF:000009">
    <property type="entry name" value="Fatty oxidation complex, alpha subunit"/>
    <property type="match status" value="1"/>
</dbReference>
<dbReference type="Gene3D" id="1.10.1040.50">
    <property type="match status" value="1"/>
</dbReference>
<dbReference type="Gene3D" id="3.90.226.10">
    <property type="entry name" value="2-enoyl-CoA Hydratase, Chain A, domain 1"/>
    <property type="match status" value="1"/>
</dbReference>
<dbReference type="Gene3D" id="3.40.50.720">
    <property type="entry name" value="NAD(P)-binding Rossmann-like Domain"/>
    <property type="match status" value="1"/>
</dbReference>
<dbReference type="HAMAP" id="MF_01621">
    <property type="entry name" value="FadB"/>
    <property type="match status" value="1"/>
</dbReference>
<dbReference type="InterPro" id="IPR006180">
    <property type="entry name" value="3-OHacyl-CoA_DH_CS"/>
</dbReference>
<dbReference type="InterPro" id="IPR006176">
    <property type="entry name" value="3-OHacyl-CoA_DH_NAD-bd"/>
</dbReference>
<dbReference type="InterPro" id="IPR006108">
    <property type="entry name" value="3HC_DH_C"/>
</dbReference>
<dbReference type="InterPro" id="IPR008927">
    <property type="entry name" value="6-PGluconate_DH-like_C_sf"/>
</dbReference>
<dbReference type="InterPro" id="IPR029045">
    <property type="entry name" value="ClpP/crotonase-like_dom_sf"/>
</dbReference>
<dbReference type="InterPro" id="IPR018376">
    <property type="entry name" value="Enoyl-CoA_hyd/isom_CS"/>
</dbReference>
<dbReference type="InterPro" id="IPR001753">
    <property type="entry name" value="Enoyl-CoA_hydra/iso"/>
</dbReference>
<dbReference type="InterPro" id="IPR050136">
    <property type="entry name" value="FA_oxidation_alpha_subunit"/>
</dbReference>
<dbReference type="InterPro" id="IPR012799">
    <property type="entry name" value="FadB"/>
</dbReference>
<dbReference type="InterPro" id="IPR036291">
    <property type="entry name" value="NAD(P)-bd_dom_sf"/>
</dbReference>
<dbReference type="NCBIfam" id="TIGR02437">
    <property type="entry name" value="FadB"/>
    <property type="match status" value="1"/>
</dbReference>
<dbReference type="NCBIfam" id="NF008727">
    <property type="entry name" value="PRK11730.1"/>
    <property type="match status" value="1"/>
</dbReference>
<dbReference type="PANTHER" id="PTHR43612">
    <property type="entry name" value="TRIFUNCTIONAL ENZYME SUBUNIT ALPHA"/>
    <property type="match status" value="1"/>
</dbReference>
<dbReference type="PANTHER" id="PTHR43612:SF3">
    <property type="entry name" value="TRIFUNCTIONAL ENZYME SUBUNIT ALPHA, MITOCHONDRIAL"/>
    <property type="match status" value="1"/>
</dbReference>
<dbReference type="Pfam" id="PF00725">
    <property type="entry name" value="3HCDH"/>
    <property type="match status" value="2"/>
</dbReference>
<dbReference type="Pfam" id="PF02737">
    <property type="entry name" value="3HCDH_N"/>
    <property type="match status" value="1"/>
</dbReference>
<dbReference type="Pfam" id="PF00378">
    <property type="entry name" value="ECH_1"/>
    <property type="match status" value="1"/>
</dbReference>
<dbReference type="SUPFAM" id="SSF48179">
    <property type="entry name" value="6-phosphogluconate dehydrogenase C-terminal domain-like"/>
    <property type="match status" value="2"/>
</dbReference>
<dbReference type="SUPFAM" id="SSF52096">
    <property type="entry name" value="ClpP/crotonase"/>
    <property type="match status" value="1"/>
</dbReference>
<dbReference type="SUPFAM" id="SSF51735">
    <property type="entry name" value="NAD(P)-binding Rossmann-fold domains"/>
    <property type="match status" value="1"/>
</dbReference>
<dbReference type="PROSITE" id="PS00067">
    <property type="entry name" value="3HCDH"/>
    <property type="match status" value="1"/>
</dbReference>
<dbReference type="PROSITE" id="PS00166">
    <property type="entry name" value="ENOYL_COA_HYDRATASE"/>
    <property type="match status" value="1"/>
</dbReference>